<keyword id="KW-0325">Glycoprotein</keyword>
<keyword id="KW-0349">Heme</keyword>
<keyword id="KW-0408">Iron</keyword>
<keyword id="KW-0472">Membrane</keyword>
<keyword id="KW-0479">Metal-binding</keyword>
<keyword id="KW-0503">Monooxygenase</keyword>
<keyword id="KW-0560">Oxidoreductase</keyword>
<keyword id="KW-1185">Reference proteome</keyword>
<keyword id="KW-0812">Transmembrane</keyword>
<keyword id="KW-1133">Transmembrane helix</keyword>
<proteinExistence type="evidence at protein level"/>
<protein>
    <recommendedName>
        <fullName evidence="5">Cytochrome P450 monooxygenase btcC</fullName>
        <ecNumber evidence="4">1.-.-.-</ecNumber>
    </recommendedName>
    <alternativeName>
        <fullName evidence="5">Betaestacins biosynthesis cluster protein C</fullName>
    </alternativeName>
</protein>
<sequence>MIFLLTLAGLKVLSIVILFGIIYLFASSIYNLYFHPLSRFPGPFLARAQDFWVSRQWISGNWPWEVEALHAKYGDIVRIGPNELSCAHPQSIKDIYGQPNINHPQFFRKFTTFYKQTDVGGSIGTEVDPHIHQGIRKRLAPGFSVSALSKQSDIVIRHIDSLLHQVSRNGQCQSGMNMSQWFMWLAFDVIVDLSFGEELGTVETGTGNDWINMLANSGFQIALGYVVRRRWKALQDLVRYCLVNEKSKSMRTKYIANAREKARQRLERGADVERFDFFSHLLREKAPEANIDFFASQGTTLVAAGTETTSTFMSALTYYLLQNPRALDRLQEELRRSFKHHSEIDGESTKSLKYLNAAIEEGMRIFAPAPFGLPRVSPGAMVSGEWIPKGSIIATAAHVTSRDERWFFKSKEFHPERWLPLDHPHYDHIFSKDRKDASKPFSIGSRSCIGIHLSYMEVRICVSKLAWSFDWEQVSAHEDFVKDARLLGLWKAAPFHVRYQPYPGAEPPVMNHSKINSDLA</sequence>
<organism>
    <name type="scientific">Colletotrichum orbiculare (strain 104-T / ATCC 96160 / CBS 514.97 / LARS 414 / MAFF 240422)</name>
    <name type="common">Cucumber anthracnose fungus</name>
    <name type="synonym">Colletotrichum lagenarium</name>
    <dbReference type="NCBI Taxonomy" id="1213857"/>
    <lineage>
        <taxon>Eukaryota</taxon>
        <taxon>Fungi</taxon>
        <taxon>Dikarya</taxon>
        <taxon>Ascomycota</taxon>
        <taxon>Pezizomycotina</taxon>
        <taxon>Sordariomycetes</taxon>
        <taxon>Hypocreomycetidae</taxon>
        <taxon>Glomerellales</taxon>
        <taxon>Glomerellaceae</taxon>
        <taxon>Colletotrichum</taxon>
        <taxon>Colletotrichum orbiculare species complex</taxon>
    </lineage>
</organism>
<dbReference type="EC" id="1.-.-.-" evidence="4"/>
<dbReference type="EMBL" id="KB726025">
    <property type="protein sequence ID" value="ENH79268.1"/>
    <property type="status" value="ALT_SEQ"/>
    <property type="molecule type" value="Genomic_DNA"/>
</dbReference>
<dbReference type="EMBL" id="AMCV02000011">
    <property type="protein sequence ID" value="TDZ22090.1"/>
    <property type="molecule type" value="Genomic_DNA"/>
</dbReference>
<dbReference type="STRING" id="1213857.A0A484FVL2"/>
<dbReference type="GlyCosmos" id="A0A484FVL2">
    <property type="glycosylation" value="2 sites, No reported glycans"/>
</dbReference>
<dbReference type="EnsemblFungi" id="ENH79268">
    <property type="protein sequence ID" value="ENH79268"/>
    <property type="gene ID" value="Cob_11436"/>
</dbReference>
<dbReference type="eggNOG" id="KOG0159">
    <property type="taxonomic scope" value="Eukaryota"/>
</dbReference>
<dbReference type="HOGENOM" id="CLU_001570_14_11_1"/>
<dbReference type="OrthoDB" id="1470350at2759"/>
<dbReference type="UniPathway" id="UPA00213"/>
<dbReference type="Proteomes" id="UP000014480">
    <property type="component" value="Unassembled WGS sequence"/>
</dbReference>
<dbReference type="GO" id="GO:0016020">
    <property type="term" value="C:membrane"/>
    <property type="evidence" value="ECO:0007669"/>
    <property type="project" value="UniProtKB-SubCell"/>
</dbReference>
<dbReference type="GO" id="GO:0020037">
    <property type="term" value="F:heme binding"/>
    <property type="evidence" value="ECO:0007669"/>
    <property type="project" value="InterPro"/>
</dbReference>
<dbReference type="GO" id="GO:0005506">
    <property type="term" value="F:iron ion binding"/>
    <property type="evidence" value="ECO:0007669"/>
    <property type="project" value="InterPro"/>
</dbReference>
<dbReference type="GO" id="GO:0004497">
    <property type="term" value="F:monooxygenase activity"/>
    <property type="evidence" value="ECO:0007669"/>
    <property type="project" value="UniProtKB-KW"/>
</dbReference>
<dbReference type="GO" id="GO:0016705">
    <property type="term" value="F:oxidoreductase activity, acting on paired donors, with incorporation or reduction of molecular oxygen"/>
    <property type="evidence" value="ECO:0007669"/>
    <property type="project" value="InterPro"/>
</dbReference>
<dbReference type="GO" id="GO:0016114">
    <property type="term" value="P:terpenoid biosynthetic process"/>
    <property type="evidence" value="ECO:0007669"/>
    <property type="project" value="UniProtKB-UniPathway"/>
</dbReference>
<dbReference type="CDD" id="cd11058">
    <property type="entry name" value="CYP60B-like"/>
    <property type="match status" value="1"/>
</dbReference>
<dbReference type="Gene3D" id="1.10.630.10">
    <property type="entry name" value="Cytochrome P450"/>
    <property type="match status" value="1"/>
</dbReference>
<dbReference type="InterPro" id="IPR001128">
    <property type="entry name" value="Cyt_P450"/>
</dbReference>
<dbReference type="InterPro" id="IPR017972">
    <property type="entry name" value="Cyt_P450_CS"/>
</dbReference>
<dbReference type="InterPro" id="IPR002401">
    <property type="entry name" value="Cyt_P450_E_grp-I"/>
</dbReference>
<dbReference type="InterPro" id="IPR036396">
    <property type="entry name" value="Cyt_P450_sf"/>
</dbReference>
<dbReference type="InterPro" id="IPR050121">
    <property type="entry name" value="Cytochrome_P450_monoxygenase"/>
</dbReference>
<dbReference type="PANTHER" id="PTHR24305">
    <property type="entry name" value="CYTOCHROME P450"/>
    <property type="match status" value="1"/>
</dbReference>
<dbReference type="PANTHER" id="PTHR24305:SF210">
    <property type="entry name" value="CYTOCHROME P450 MONOOXYGENASE ASQL-RELATED"/>
    <property type="match status" value="1"/>
</dbReference>
<dbReference type="Pfam" id="PF00067">
    <property type="entry name" value="p450"/>
    <property type="match status" value="1"/>
</dbReference>
<dbReference type="PRINTS" id="PR00463">
    <property type="entry name" value="EP450I"/>
</dbReference>
<dbReference type="PRINTS" id="PR00385">
    <property type="entry name" value="P450"/>
</dbReference>
<dbReference type="SUPFAM" id="SSF48264">
    <property type="entry name" value="Cytochrome P450"/>
    <property type="match status" value="1"/>
</dbReference>
<dbReference type="PROSITE" id="PS00086">
    <property type="entry name" value="CYTOCHROME_P450"/>
    <property type="match status" value="1"/>
</dbReference>
<comment type="function">
    <text evidence="4">Cytochrome P4590 monooxygenase part of the gene cluster that mediates the biosynthesis of betaestacins (Ref.3). The bifunctional terpene synthase btcA converts isopentenyl diphosphate (IPP) and dimethylallyl diphosphate (DMAPP) into the sesterterpene betaestacin I (Ref.3). The C-terminal prenyltransferase (PT) domain of btcA catalyzes formation of GFPP, whereas the N-terminal terpene cyclase (TC) domain catalyzes the cyclization of GFPP into betaestacin I (Ref.3). The cytochrome P450 monooxygenase btcB oxidizes the C25 methyl group of betaestacin I to yield the carboxylic acid betaestacin IV via the alcohol betaestacin III (Ref.3). The cytochrome P450 monooxygenase btcC further catalyzes the multistep oxidation of betaestacin IV to produce several compounds, including betaestacins Va, Vb, Vc and VI (Ref.3).</text>
</comment>
<comment type="cofactor">
    <cofactor evidence="1">
        <name>heme</name>
        <dbReference type="ChEBI" id="CHEBI:30413"/>
    </cofactor>
</comment>
<comment type="pathway">
    <text evidence="4">Secondary metabolite biosynthesis; terpenoid biosynthesis.</text>
</comment>
<comment type="subcellular location">
    <subcellularLocation>
        <location evidence="2">Membrane</location>
        <topology evidence="2">Single-pass membrane protein</topology>
    </subcellularLocation>
</comment>
<comment type="similarity">
    <text evidence="6">Belongs to the cytochrome P450 family.</text>
</comment>
<comment type="sequence caution" evidence="6">
    <conflict type="erroneous gene model prediction">
        <sequence resource="EMBL-CDS" id="ENH79268"/>
    </conflict>
</comment>
<name>BTCC_COLOR</name>
<accession>A0A484FVL2</accession>
<accession>N4UU25</accession>
<evidence type="ECO:0000250" key="1">
    <source>
        <dbReference type="UniProtKB" id="P04798"/>
    </source>
</evidence>
<evidence type="ECO:0000255" key="2"/>
<evidence type="ECO:0000255" key="3">
    <source>
        <dbReference type="PROSITE-ProRule" id="PRU00498"/>
    </source>
</evidence>
<evidence type="ECO:0000269" key="4">
    <source ref="3"/>
</evidence>
<evidence type="ECO:0000303" key="5">
    <source ref="3"/>
</evidence>
<evidence type="ECO:0000305" key="6"/>
<reference key="1">
    <citation type="journal article" date="2013" name="New Phytol.">
        <title>Comparative genomic and transcriptomic analyses reveal the hemibiotrophic stage shift of Colletotrichum fungi.</title>
        <authorList>
            <person name="Gan P."/>
            <person name="Ikeda K."/>
            <person name="Irieda H."/>
            <person name="Narusaka M."/>
            <person name="O'Connell R.J."/>
            <person name="Narusaka Y."/>
            <person name="Takano Y."/>
            <person name="Kubo Y."/>
            <person name="Shirasu K."/>
        </authorList>
    </citation>
    <scope>NUCLEOTIDE SEQUENCE [LARGE SCALE GENOMIC DNA]</scope>
    <source>
        <strain>104-T / ATCC 96160 / CBS 514.97 / LARS 414 / MAFF 240422</strain>
    </source>
</reference>
<reference key="2">
    <citation type="journal article" date="2019" name="Mol. Plant Microbe Interact.">
        <title>Genome sequence resources for four phytopathogenic fungi from the Colletotrichum orbiculare species complex.</title>
        <authorList>
            <person name="Gan P."/>
            <person name="Tsushima A."/>
            <person name="Narusaka M."/>
            <person name="Narusaka Y."/>
            <person name="Takano Y."/>
            <person name="Kubo Y."/>
            <person name="Shirasu K."/>
        </authorList>
    </citation>
    <scope>GENOME REANNOTATION</scope>
    <source>
        <strain>104-T / ATCC 96160 / CBS 514.97 / LARS 414 / MAFF 240422</strain>
    </source>
</reference>
<reference key="3">
    <citation type="journal article" date="2018" name="Tetrahedron Lett.">
        <title>Identification of novel sesterterpenes by genome mining of phytopathogenic fungi Phoma and Colletotrichum sp.</title>
        <authorList>
            <person name="Gao L."/>
            <person name="Narita K."/>
            <person name="Ozaki T."/>
            <person name="Kamukara N."/>
            <person name="Gan P."/>
            <person name="Minami A."/>
            <person name="Liu C."/>
            <person name="Lei X."/>
            <person name="Shirasu K."/>
            <person name="Oikawa H."/>
        </authorList>
    </citation>
    <scope>FUNCTION</scope>
    <scope>CATALYTIC ACTIVITY</scope>
    <scope>PATHWAY</scope>
</reference>
<feature type="chain" id="PRO_0000453712" description="Cytochrome P450 monooxygenase btcC">
    <location>
        <begin position="1"/>
        <end position="520"/>
    </location>
</feature>
<feature type="transmembrane region" description="Helical" evidence="2">
    <location>
        <begin position="2"/>
        <end position="22"/>
    </location>
</feature>
<feature type="binding site" description="axial binding residue" evidence="1">
    <location>
        <position position="448"/>
    </location>
    <ligand>
        <name>heme</name>
        <dbReference type="ChEBI" id="CHEBI:30413"/>
    </ligand>
    <ligandPart>
        <name>Fe</name>
        <dbReference type="ChEBI" id="CHEBI:18248"/>
    </ligandPart>
</feature>
<feature type="glycosylation site" description="N-linked (GlcNAc...) asparagine" evidence="3">
    <location>
        <position position="177"/>
    </location>
</feature>
<feature type="glycosylation site" description="N-linked (GlcNAc...) asparagine" evidence="3">
    <location>
        <position position="511"/>
    </location>
</feature>
<gene>
    <name evidence="5" type="primary">btcC</name>
    <name type="ORF">Cob_11436</name>
    <name type="ORF">Cob_v004819</name>
</gene>